<reference key="1">
    <citation type="journal article" date="1993" name="Biochem. J.">
        <title>Epitope mapping of annexin I: antibodies that compete with phospholipids and calcium recognize amino acids 42-99.</title>
        <authorList>
            <person name="Ernst J.D."/>
        </authorList>
    </citation>
    <scope>NUCLEOTIDE SEQUENCE [MRNA]</scope>
    <source>
        <tissue>Kidney</tissue>
    </source>
</reference>
<reference key="2">
    <citation type="journal article" date="2005" name="BMC Genomics">
        <title>Characterization of 954 bovine full-CDS cDNA sequences.</title>
        <authorList>
            <person name="Harhay G.P."/>
            <person name="Sonstegard T.S."/>
            <person name="Keele J.W."/>
            <person name="Heaton M.P."/>
            <person name="Clawson M.L."/>
            <person name="Snelling W.M."/>
            <person name="Wiedmann R.T."/>
            <person name="Van Tassell C.P."/>
            <person name="Smith T.P.L."/>
        </authorList>
    </citation>
    <scope>NUCLEOTIDE SEQUENCE [LARGE SCALE MRNA]</scope>
</reference>
<reference key="3">
    <citation type="submission" date="2005-08" db="EMBL/GenBank/DDBJ databases">
        <authorList>
            <consortium name="NIH - Mammalian Gene Collection (MGC) project"/>
        </authorList>
    </citation>
    <scope>NUCLEOTIDE SEQUENCE [LARGE SCALE MRNA]</scope>
    <source>
        <strain>Crossbred X Angus</strain>
        <tissue>Ileum</tissue>
    </source>
</reference>
<reference key="4">
    <citation type="journal article" date="2015" name="Vet. Res.">
        <title>Localization of annexins A1 and A2 in the respiratory tract of healthy calves and those experimentally infected with Mannheimia haemolytica.</title>
        <authorList>
            <person name="Senthilkumaran C."/>
            <person name="Hewson J."/>
            <person name="Ollivett T.L."/>
            <person name="Bienzle D."/>
            <person name="Lillie B.N."/>
            <person name="Clark M."/>
            <person name="Caswell J.L."/>
        </authorList>
    </citation>
    <scope>SUBCELLULAR LOCATION</scope>
    <scope>TISSUE SPECIFICITY</scope>
</reference>
<dbReference type="EMBL" id="X56649">
    <property type="protein sequence ID" value="CAA39971.1"/>
    <property type="molecule type" value="mRNA"/>
</dbReference>
<dbReference type="EMBL" id="BT021501">
    <property type="protein sequence ID" value="AAX46348.1"/>
    <property type="molecule type" value="mRNA"/>
</dbReference>
<dbReference type="EMBL" id="BC103375">
    <property type="protein sequence ID" value="AAI03376.1"/>
    <property type="molecule type" value="mRNA"/>
</dbReference>
<dbReference type="PIR" id="S28228">
    <property type="entry name" value="S28228"/>
</dbReference>
<dbReference type="RefSeq" id="NP_786978.2">
    <property type="nucleotide sequence ID" value="NM_175784.3"/>
</dbReference>
<dbReference type="SMR" id="P46193"/>
<dbReference type="FunCoup" id="P46193">
    <property type="interactions" value="687"/>
</dbReference>
<dbReference type="IntAct" id="P46193">
    <property type="interactions" value="1"/>
</dbReference>
<dbReference type="STRING" id="9913.ENSBTAP00000021256"/>
<dbReference type="ChEMBL" id="CHEMBL3308971"/>
<dbReference type="iPTMnet" id="P46193"/>
<dbReference type="PaxDb" id="9913-ENSBTAP00000021256"/>
<dbReference type="PeptideAtlas" id="P46193"/>
<dbReference type="GeneID" id="327662"/>
<dbReference type="KEGG" id="bta:327662"/>
<dbReference type="CTD" id="301"/>
<dbReference type="eggNOG" id="KOG0819">
    <property type="taxonomic scope" value="Eukaryota"/>
</dbReference>
<dbReference type="InParanoid" id="P46193"/>
<dbReference type="OrthoDB" id="37886at2759"/>
<dbReference type="Proteomes" id="UP000009136">
    <property type="component" value="Unplaced"/>
</dbReference>
<dbReference type="GO" id="GO:0016324">
    <property type="term" value="C:apical plasma membrane"/>
    <property type="evidence" value="ECO:0000250"/>
    <property type="project" value="UniProtKB"/>
</dbReference>
<dbReference type="GO" id="GO:0016323">
    <property type="term" value="C:basolateral plasma membrane"/>
    <property type="evidence" value="ECO:0007669"/>
    <property type="project" value="UniProtKB-SubCell"/>
</dbReference>
<dbReference type="GO" id="GO:0005737">
    <property type="term" value="C:cytoplasm"/>
    <property type="evidence" value="ECO:0000318"/>
    <property type="project" value="GO_Central"/>
</dbReference>
<dbReference type="GO" id="GO:0005829">
    <property type="term" value="C:cytosol"/>
    <property type="evidence" value="ECO:0000314"/>
    <property type="project" value="AgBase"/>
</dbReference>
<dbReference type="GO" id="GO:0031901">
    <property type="term" value="C:early endosome membrane"/>
    <property type="evidence" value="ECO:0000250"/>
    <property type="project" value="UniProtKB"/>
</dbReference>
<dbReference type="GO" id="GO:0070062">
    <property type="term" value="C:extracellular exosome"/>
    <property type="evidence" value="ECO:0000250"/>
    <property type="project" value="UniProtKB"/>
</dbReference>
<dbReference type="GO" id="GO:0005615">
    <property type="term" value="C:extracellular space"/>
    <property type="evidence" value="ECO:0000250"/>
    <property type="project" value="UniProtKB"/>
</dbReference>
<dbReference type="GO" id="GO:0016328">
    <property type="term" value="C:lateral plasma membrane"/>
    <property type="evidence" value="ECO:0000250"/>
    <property type="project" value="UniProtKB"/>
</dbReference>
<dbReference type="GO" id="GO:0016020">
    <property type="term" value="C:membrane"/>
    <property type="evidence" value="ECO:0000314"/>
    <property type="project" value="AgBase"/>
</dbReference>
<dbReference type="GO" id="GO:0031514">
    <property type="term" value="C:motile cilium"/>
    <property type="evidence" value="ECO:0000250"/>
    <property type="project" value="UniProtKB"/>
</dbReference>
<dbReference type="GO" id="GO:0005634">
    <property type="term" value="C:nucleus"/>
    <property type="evidence" value="ECO:0000314"/>
    <property type="project" value="AgBase"/>
</dbReference>
<dbReference type="GO" id="GO:0001891">
    <property type="term" value="C:phagocytic cup"/>
    <property type="evidence" value="ECO:0007669"/>
    <property type="project" value="UniProtKB-SubCell"/>
</dbReference>
<dbReference type="GO" id="GO:0005886">
    <property type="term" value="C:plasma membrane"/>
    <property type="evidence" value="ECO:0000250"/>
    <property type="project" value="UniProtKB"/>
</dbReference>
<dbReference type="GO" id="GO:0012506">
    <property type="term" value="C:vesicle membrane"/>
    <property type="evidence" value="ECO:0000318"/>
    <property type="project" value="GO_Central"/>
</dbReference>
<dbReference type="GO" id="GO:0005509">
    <property type="term" value="F:calcium ion binding"/>
    <property type="evidence" value="ECO:0000250"/>
    <property type="project" value="UniProtKB"/>
</dbReference>
<dbReference type="GO" id="GO:0005544">
    <property type="term" value="F:calcium-dependent phospholipid binding"/>
    <property type="evidence" value="ECO:0000250"/>
    <property type="project" value="UniProtKB"/>
</dbReference>
<dbReference type="GO" id="GO:0001786">
    <property type="term" value="F:phosphatidylserine binding"/>
    <property type="evidence" value="ECO:0000318"/>
    <property type="project" value="GO_Central"/>
</dbReference>
<dbReference type="GO" id="GO:0019834">
    <property type="term" value="F:phospholipase A2 inhibitor activity"/>
    <property type="evidence" value="ECO:0007669"/>
    <property type="project" value="UniProtKB-KW"/>
</dbReference>
<dbReference type="GO" id="GO:0030036">
    <property type="term" value="P:actin cytoskeleton organization"/>
    <property type="evidence" value="ECO:0000250"/>
    <property type="project" value="UniProtKB"/>
</dbReference>
<dbReference type="GO" id="GO:0002250">
    <property type="term" value="P:adaptive immune response"/>
    <property type="evidence" value="ECO:0007669"/>
    <property type="project" value="UniProtKB-KW"/>
</dbReference>
<dbReference type="GO" id="GO:0070588">
    <property type="term" value="P:calcium ion transmembrane transport"/>
    <property type="evidence" value="ECO:0000314"/>
    <property type="project" value="AgBase"/>
</dbReference>
<dbReference type="GO" id="GO:0071385">
    <property type="term" value="P:cellular response to glucocorticoid stimulus"/>
    <property type="evidence" value="ECO:0000250"/>
    <property type="project" value="UniProtKB"/>
</dbReference>
<dbReference type="GO" id="GO:0007187">
    <property type="term" value="P:G protein-coupled receptor signaling pathway, coupled to cyclic nucleotide second messenger"/>
    <property type="evidence" value="ECO:0000250"/>
    <property type="project" value="UniProtKB"/>
</dbReference>
<dbReference type="GO" id="GO:0071621">
    <property type="term" value="P:granulocyte chemotaxis"/>
    <property type="evidence" value="ECO:0000250"/>
    <property type="project" value="UniProtKB"/>
</dbReference>
<dbReference type="GO" id="GO:0006954">
    <property type="term" value="P:inflammatory response"/>
    <property type="evidence" value="ECO:0000250"/>
    <property type="project" value="UniProtKB"/>
</dbReference>
<dbReference type="GO" id="GO:0045087">
    <property type="term" value="P:innate immune response"/>
    <property type="evidence" value="ECO:0007669"/>
    <property type="project" value="UniProtKB-KW"/>
</dbReference>
<dbReference type="GO" id="GO:0002548">
    <property type="term" value="P:monocyte chemotaxis"/>
    <property type="evidence" value="ECO:0000250"/>
    <property type="project" value="UniProtKB"/>
</dbReference>
<dbReference type="GO" id="GO:0045920">
    <property type="term" value="P:negative regulation of exocytosis"/>
    <property type="evidence" value="ECO:0000250"/>
    <property type="project" value="UniProtKB"/>
</dbReference>
<dbReference type="GO" id="GO:0045629">
    <property type="term" value="P:negative regulation of T-helper 2 cell differentiation"/>
    <property type="evidence" value="ECO:0000250"/>
    <property type="project" value="UniProtKB"/>
</dbReference>
<dbReference type="GO" id="GO:0042119">
    <property type="term" value="P:neutrophil activation"/>
    <property type="evidence" value="ECO:0000250"/>
    <property type="project" value="UniProtKB"/>
</dbReference>
<dbReference type="GO" id="GO:0006909">
    <property type="term" value="P:phagocytosis"/>
    <property type="evidence" value="ECO:0000250"/>
    <property type="project" value="UniProtKB"/>
</dbReference>
<dbReference type="GO" id="GO:0032743">
    <property type="term" value="P:positive regulation of interleukin-2 production"/>
    <property type="evidence" value="ECO:0000250"/>
    <property type="project" value="UniProtKB"/>
</dbReference>
<dbReference type="GO" id="GO:0042102">
    <property type="term" value="P:positive regulation of T cell proliferation"/>
    <property type="evidence" value="ECO:0000250"/>
    <property type="project" value="UniProtKB"/>
</dbReference>
<dbReference type="GO" id="GO:0045627">
    <property type="term" value="P:positive regulation of T-helper 1 cell differentiation"/>
    <property type="evidence" value="ECO:0000250"/>
    <property type="project" value="UniProtKB"/>
</dbReference>
<dbReference type="GO" id="GO:0090303">
    <property type="term" value="P:positive regulation of wound healing"/>
    <property type="evidence" value="ECO:0000250"/>
    <property type="project" value="UniProtKB"/>
</dbReference>
<dbReference type="GO" id="GO:0008360">
    <property type="term" value="P:regulation of cell shape"/>
    <property type="evidence" value="ECO:0000250"/>
    <property type="project" value="UniProtKB"/>
</dbReference>
<dbReference type="GO" id="GO:0046883">
    <property type="term" value="P:regulation of hormone secretion"/>
    <property type="evidence" value="ECO:0000250"/>
    <property type="project" value="UniProtKB"/>
</dbReference>
<dbReference type="GO" id="GO:0050727">
    <property type="term" value="P:regulation of inflammatory response"/>
    <property type="evidence" value="ECO:0000250"/>
    <property type="project" value="UniProtKB"/>
</dbReference>
<dbReference type="GO" id="GO:0032652">
    <property type="term" value="P:regulation of interleukin-1 production"/>
    <property type="evidence" value="ECO:0000250"/>
    <property type="project" value="UniProtKB"/>
</dbReference>
<dbReference type="GO" id="GO:0002685">
    <property type="term" value="P:regulation of leukocyte migration"/>
    <property type="evidence" value="ECO:0000250"/>
    <property type="project" value="UniProtKB"/>
</dbReference>
<dbReference type="GO" id="GO:0007165">
    <property type="term" value="P:signal transduction"/>
    <property type="evidence" value="ECO:0000318"/>
    <property type="project" value="GO_Central"/>
</dbReference>
<dbReference type="FunFam" id="1.10.220.10:FF:000001">
    <property type="entry name" value="Annexin"/>
    <property type="match status" value="1"/>
</dbReference>
<dbReference type="FunFam" id="1.10.220.10:FF:000002">
    <property type="entry name" value="Annexin"/>
    <property type="match status" value="1"/>
</dbReference>
<dbReference type="FunFam" id="1.10.220.10:FF:000003">
    <property type="entry name" value="Annexin"/>
    <property type="match status" value="1"/>
</dbReference>
<dbReference type="FunFam" id="1.10.220.10:FF:000007">
    <property type="entry name" value="Annexin"/>
    <property type="match status" value="1"/>
</dbReference>
<dbReference type="Gene3D" id="1.10.220.10">
    <property type="entry name" value="Annexin"/>
    <property type="match status" value="4"/>
</dbReference>
<dbReference type="InterPro" id="IPR001464">
    <property type="entry name" value="Annexin"/>
</dbReference>
<dbReference type="InterPro" id="IPR018502">
    <property type="entry name" value="Annexin_repeat"/>
</dbReference>
<dbReference type="InterPro" id="IPR018252">
    <property type="entry name" value="Annexin_repeat_CS"/>
</dbReference>
<dbReference type="InterPro" id="IPR037104">
    <property type="entry name" value="Annexin_sf"/>
</dbReference>
<dbReference type="InterPro" id="IPR002388">
    <property type="entry name" value="ANX1"/>
</dbReference>
<dbReference type="PANTHER" id="PTHR10502">
    <property type="entry name" value="ANNEXIN"/>
    <property type="match status" value="1"/>
</dbReference>
<dbReference type="PANTHER" id="PTHR10502:SF17">
    <property type="entry name" value="ANNEXIN A1"/>
    <property type="match status" value="1"/>
</dbReference>
<dbReference type="Pfam" id="PF00191">
    <property type="entry name" value="Annexin"/>
    <property type="match status" value="4"/>
</dbReference>
<dbReference type="PRINTS" id="PR00196">
    <property type="entry name" value="ANNEXIN"/>
</dbReference>
<dbReference type="PRINTS" id="PR00197">
    <property type="entry name" value="ANNEXINI"/>
</dbReference>
<dbReference type="SMART" id="SM00335">
    <property type="entry name" value="ANX"/>
    <property type="match status" value="4"/>
</dbReference>
<dbReference type="SUPFAM" id="SSF47874">
    <property type="entry name" value="Annexin"/>
    <property type="match status" value="1"/>
</dbReference>
<dbReference type="PROSITE" id="PS00223">
    <property type="entry name" value="ANNEXIN_1"/>
    <property type="match status" value="4"/>
</dbReference>
<dbReference type="PROSITE" id="PS51897">
    <property type="entry name" value="ANNEXIN_2"/>
    <property type="match status" value="4"/>
</dbReference>
<accession>P46193</accession>
<accession>Q3ZBF5</accession>
<accession>Q58DU6</accession>
<evidence type="ECO:0000250" key="1"/>
<evidence type="ECO:0000250" key="2">
    <source>
        <dbReference type="UniProtKB" id="P04083"/>
    </source>
</evidence>
<evidence type="ECO:0000250" key="3">
    <source>
        <dbReference type="UniProtKB" id="P07150"/>
    </source>
</evidence>
<evidence type="ECO:0000250" key="4">
    <source>
        <dbReference type="UniProtKB" id="P10107"/>
    </source>
</evidence>
<evidence type="ECO:0000250" key="5">
    <source>
        <dbReference type="UniProtKB" id="P19619"/>
    </source>
</evidence>
<evidence type="ECO:0000250" key="6">
    <source>
        <dbReference type="UniProtKB" id="P51662"/>
    </source>
</evidence>
<evidence type="ECO:0000255" key="7">
    <source>
        <dbReference type="PROSITE-ProRule" id="PRU01245"/>
    </source>
</evidence>
<evidence type="ECO:0000269" key="8">
    <source>
    </source>
</evidence>
<evidence type="ECO:0000305" key="9"/>
<feature type="initiator methionine" description="Removed" evidence="2">
    <location>
        <position position="1"/>
    </location>
</feature>
<feature type="chain" id="PRO_0000067457" description="Annexin A1">
    <location>
        <begin position="2"/>
        <end position="346"/>
    </location>
</feature>
<feature type="peptide" id="PRO_0000454553" description="Annexin Ac2-26" evidence="2">
    <location>
        <begin position="2"/>
        <end position="26"/>
    </location>
</feature>
<feature type="repeat" description="Annexin 1" evidence="7">
    <location>
        <begin position="42"/>
        <end position="113"/>
    </location>
</feature>
<feature type="repeat" description="Annexin 2" evidence="7">
    <location>
        <begin position="114"/>
        <end position="185"/>
    </location>
</feature>
<feature type="repeat" description="Annexin 3" evidence="7">
    <location>
        <begin position="197"/>
        <end position="269"/>
    </location>
</feature>
<feature type="repeat" description="Annexin 4" evidence="7">
    <location>
        <begin position="273"/>
        <end position="344"/>
    </location>
</feature>
<feature type="binding site" evidence="5">
    <location>
        <position position="59"/>
    </location>
    <ligand>
        <name>Ca(2+)</name>
        <dbReference type="ChEBI" id="CHEBI:29108"/>
        <label>1</label>
    </ligand>
</feature>
<feature type="binding site" evidence="5">
    <location>
        <position position="60"/>
    </location>
    <ligand>
        <name>Ca(2+)</name>
        <dbReference type="ChEBI" id="CHEBI:29108"/>
        <label>1</label>
    </ligand>
</feature>
<feature type="binding site" evidence="5">
    <location>
        <position position="62"/>
    </location>
    <ligand>
        <name>Ca(2+)</name>
        <dbReference type="ChEBI" id="CHEBI:29108"/>
        <label>1</label>
    </ligand>
</feature>
<feature type="binding site" evidence="5">
    <location>
        <position position="97"/>
    </location>
    <ligand>
        <name>Ca(2+)</name>
        <dbReference type="ChEBI" id="CHEBI:29108"/>
        <label>2</label>
    </ligand>
</feature>
<feature type="binding site" evidence="5">
    <location>
        <position position="100"/>
    </location>
    <ligand>
        <name>Ca(2+)</name>
        <dbReference type="ChEBI" id="CHEBI:29108"/>
        <label>2</label>
    </ligand>
</feature>
<feature type="binding site" evidence="5">
    <location>
        <position position="105"/>
    </location>
    <ligand>
        <name>Ca(2+)</name>
        <dbReference type="ChEBI" id="CHEBI:29108"/>
        <label>2</label>
    </ligand>
</feature>
<feature type="binding site" evidence="5">
    <location>
        <position position="127"/>
    </location>
    <ligand>
        <name>Ca(2+)</name>
        <dbReference type="ChEBI" id="CHEBI:29108"/>
        <label>3</label>
    </ligand>
</feature>
<feature type="binding site" evidence="5">
    <location>
        <position position="129"/>
    </location>
    <ligand>
        <name>Ca(2+)</name>
        <dbReference type="ChEBI" id="CHEBI:29108"/>
        <label>3</label>
    </ligand>
</feature>
<feature type="binding site" evidence="5">
    <location>
        <position position="131"/>
    </location>
    <ligand>
        <name>Ca(2+)</name>
        <dbReference type="ChEBI" id="CHEBI:29108"/>
        <label>3</label>
    </ligand>
</feature>
<feature type="binding site" evidence="5">
    <location>
        <position position="132"/>
    </location>
    <ligand>
        <name>Ca(2+)</name>
        <dbReference type="ChEBI" id="CHEBI:29108"/>
        <label>4</label>
    </ligand>
</feature>
<feature type="binding site" evidence="5">
    <location>
        <position position="134"/>
    </location>
    <ligand>
        <name>Ca(2+)</name>
        <dbReference type="ChEBI" id="CHEBI:29108"/>
        <label>4</label>
    </ligand>
</feature>
<feature type="binding site" evidence="5">
    <location>
        <position position="171"/>
    </location>
    <ligand>
        <name>Ca(2+)</name>
        <dbReference type="ChEBI" id="CHEBI:29108"/>
        <label>3</label>
    </ligand>
</feature>
<feature type="binding site" evidence="5">
    <location>
        <position position="210"/>
    </location>
    <ligand>
        <name>Ca(2+)</name>
        <dbReference type="ChEBI" id="CHEBI:29108"/>
        <label>5</label>
    </ligand>
</feature>
<feature type="binding site" evidence="5">
    <location>
        <position position="213"/>
    </location>
    <ligand>
        <name>Ca(2+)</name>
        <dbReference type="ChEBI" id="CHEBI:29108"/>
        <label>5</label>
    </ligand>
</feature>
<feature type="binding site" evidence="5">
    <location>
        <position position="215"/>
    </location>
    <ligand>
        <name>Ca(2+)</name>
        <dbReference type="ChEBI" id="CHEBI:29108"/>
        <label>5</label>
    </ligand>
</feature>
<feature type="binding site" evidence="5">
    <location>
        <position position="253"/>
    </location>
    <ligand>
        <name>Ca(2+)</name>
        <dbReference type="ChEBI" id="CHEBI:29108"/>
        <label>6</label>
    </ligand>
</feature>
<feature type="binding site" evidence="5">
    <location>
        <position position="255"/>
    </location>
    <ligand>
        <name>Ca(2+)</name>
        <dbReference type="ChEBI" id="CHEBI:29108"/>
        <label>5</label>
    </ligand>
</feature>
<feature type="binding site" evidence="5">
    <location>
        <position position="256"/>
    </location>
    <ligand>
        <name>Ca(2+)</name>
        <dbReference type="ChEBI" id="CHEBI:29108"/>
        <label>6</label>
    </ligand>
</feature>
<feature type="binding site" evidence="5">
    <location>
        <position position="261"/>
    </location>
    <ligand>
        <name>Ca(2+)</name>
        <dbReference type="ChEBI" id="CHEBI:29108"/>
        <label>6</label>
    </ligand>
</feature>
<feature type="binding site" evidence="5">
    <location>
        <position position="286"/>
    </location>
    <ligand>
        <name>Ca(2+)</name>
        <dbReference type="ChEBI" id="CHEBI:29108"/>
        <label>7</label>
    </ligand>
</feature>
<feature type="binding site" evidence="5">
    <location>
        <position position="288"/>
    </location>
    <ligand>
        <name>Ca(2+)</name>
        <dbReference type="ChEBI" id="CHEBI:29108"/>
        <label>7</label>
    </ligand>
</feature>
<feature type="binding site" evidence="5">
    <location>
        <position position="290"/>
    </location>
    <ligand>
        <name>Ca(2+)</name>
        <dbReference type="ChEBI" id="CHEBI:29108"/>
        <label>7</label>
    </ligand>
</feature>
<feature type="binding site" evidence="5">
    <location>
        <position position="328"/>
    </location>
    <ligand>
        <name>Ca(2+)</name>
        <dbReference type="ChEBI" id="CHEBI:29108"/>
        <label>8</label>
    </ligand>
</feature>
<feature type="binding site" evidence="5">
    <location>
        <position position="330"/>
    </location>
    <ligand>
        <name>Ca(2+)</name>
        <dbReference type="ChEBI" id="CHEBI:29108"/>
        <label>7</label>
    </ligand>
</feature>
<feature type="binding site" evidence="5">
    <location>
        <position position="331"/>
    </location>
    <ligand>
        <name>Ca(2+)</name>
        <dbReference type="ChEBI" id="CHEBI:29108"/>
        <label>8</label>
    </ligand>
</feature>
<feature type="binding site" evidence="5">
    <location>
        <position position="336"/>
    </location>
    <ligand>
        <name>Ca(2+)</name>
        <dbReference type="ChEBI" id="CHEBI:29108"/>
        <label>8</label>
    </ligand>
</feature>
<feature type="site" description="Cleavage; by CTSG" evidence="2">
    <location>
        <begin position="26"/>
        <end position="27"/>
    </location>
</feature>
<feature type="modified residue" description="N-acetylalanine" evidence="2">
    <location>
        <position position="2"/>
    </location>
</feature>
<feature type="modified residue" description="Phosphoserine; by TRPM7" evidence="2">
    <location>
        <position position="5"/>
    </location>
</feature>
<feature type="modified residue" description="Phosphotyrosine; by EGFR" evidence="2">
    <location>
        <position position="21"/>
    </location>
</feature>
<feature type="modified residue" description="Phosphoserine" evidence="2">
    <location>
        <position position="34"/>
    </location>
</feature>
<feature type="modified residue" description="Phosphoserine" evidence="2">
    <location>
        <position position="37"/>
    </location>
</feature>
<feature type="modified residue" description="Phosphothreonine" evidence="2">
    <location>
        <position position="41"/>
    </location>
</feature>
<feature type="modified residue" description="N6-acetyllysine" evidence="4">
    <location>
        <position position="58"/>
    </location>
</feature>
<feature type="modified residue" description="Phosphothreonine" evidence="2">
    <location>
        <position position="136"/>
    </location>
</feature>
<feature type="modified residue" description="N6-acetyllysine" evidence="2">
    <location>
        <position position="239"/>
    </location>
</feature>
<feature type="modified residue" description="N6-acetyllysine" evidence="2">
    <location>
        <position position="312"/>
    </location>
</feature>
<feature type="disulfide bond" evidence="5">
    <location>
        <begin position="324"/>
        <end position="343"/>
    </location>
</feature>
<feature type="cross-link" description="Isoglutamyl lysine isopeptide (Gln-Lys) (interchain with K-?)" evidence="1">
    <location>
        <position position="19"/>
    </location>
</feature>
<feature type="cross-link" description="Glycyl lysine isopeptide (Lys-Gly) (interchain with G-Cter in SUMO1); alternate" evidence="2">
    <location>
        <position position="214"/>
    </location>
</feature>
<feature type="cross-link" description="Glycyl lysine isopeptide (Lys-Gly) (interchain with G-Cter in SUMO2); alternate" evidence="2">
    <location>
        <position position="214"/>
    </location>
</feature>
<feature type="cross-link" description="Glycyl lysine isopeptide (Lys-Gly) (interchain with G-Cter in SUMO1)" evidence="4">
    <location>
        <position position="257"/>
    </location>
</feature>
<feature type="cross-link" description="Glycyl lysine isopeptide (Lys-Gly) (interchain with G-Cter in SUMO1)" evidence="2">
    <location>
        <position position="332"/>
    </location>
</feature>
<feature type="sequence conflict" description="In Ref. 2; AAX46348." evidence="9" ref="2">
    <original>K</original>
    <variation>R</variation>
    <location>
        <position position="58"/>
    </location>
</feature>
<feature type="sequence conflict" description="In Ref. 1; CAA39971." evidence="9" ref="1">
    <original>Y</original>
    <variation>H</variation>
    <location>
        <position position="156"/>
    </location>
</feature>
<feature type="sequence conflict" description="In Ref. 1; CAA39971." evidence="9" ref="1">
    <original>S</original>
    <variation>A</variation>
    <location>
        <position position="182"/>
    </location>
</feature>
<feature type="sequence conflict" description="In Ref. 1; CAA39971." evidence="9" ref="1">
    <original>I</original>
    <variation>T</variation>
    <location>
        <position position="222"/>
    </location>
</feature>
<feature type="sequence conflict" description="In Ref. 2; AAX46348." evidence="9" ref="2">
    <original>T</original>
    <variation>I</variation>
    <location>
        <position position="265"/>
    </location>
</feature>
<name>ANXA1_BOVIN</name>
<keyword id="KW-0007">Acetylation</keyword>
<keyword id="KW-1064">Adaptive immunity</keyword>
<keyword id="KW-0041">Annexin</keyword>
<keyword id="KW-0106">Calcium</keyword>
<keyword id="KW-0111">Calcium/phospholipid-binding</keyword>
<keyword id="KW-1003">Cell membrane</keyword>
<keyword id="KW-0966">Cell projection</keyword>
<keyword id="KW-0969">Cilium</keyword>
<keyword id="KW-0963">Cytoplasm</keyword>
<keyword id="KW-0968">Cytoplasmic vesicle</keyword>
<keyword id="KW-1015">Disulfide bond</keyword>
<keyword id="KW-0967">Endosome</keyword>
<keyword id="KW-0391">Immunity</keyword>
<keyword id="KW-0395">Inflammatory response</keyword>
<keyword id="KW-0399">Innate immunity</keyword>
<keyword id="KW-1017">Isopeptide bond</keyword>
<keyword id="KW-0472">Membrane</keyword>
<keyword id="KW-0479">Metal-binding</keyword>
<keyword id="KW-0539">Nucleus</keyword>
<keyword id="KW-0593">Phospholipase A2 inhibitor</keyword>
<keyword id="KW-0597">Phosphoprotein</keyword>
<keyword id="KW-1185">Reference proteome</keyword>
<keyword id="KW-0677">Repeat</keyword>
<keyword id="KW-0964">Secreted</keyword>
<keyword id="KW-0832">Ubl conjugation</keyword>
<protein>
    <recommendedName>
        <fullName>Annexin A1</fullName>
    </recommendedName>
    <alternativeName>
        <fullName>Annexin I</fullName>
    </alternativeName>
    <alternativeName>
        <fullName>Annexin-1</fullName>
    </alternativeName>
    <alternativeName>
        <fullName>Calpactin II</fullName>
    </alternativeName>
    <alternativeName>
        <fullName>Calpactin-2</fullName>
    </alternativeName>
    <alternativeName>
        <fullName>Chromobindin-9</fullName>
    </alternativeName>
    <alternativeName>
        <fullName>Lipocortin I</fullName>
    </alternativeName>
    <alternativeName>
        <fullName>Phospholipase A2 inhibitory protein</fullName>
    </alternativeName>
    <alternativeName>
        <fullName>p35</fullName>
    </alternativeName>
    <component>
        <recommendedName>
            <fullName evidence="2">Annexin Ac2-26</fullName>
        </recommendedName>
    </component>
</protein>
<proteinExistence type="evidence at protein level"/>
<organism>
    <name type="scientific">Bos taurus</name>
    <name type="common">Bovine</name>
    <dbReference type="NCBI Taxonomy" id="9913"/>
    <lineage>
        <taxon>Eukaryota</taxon>
        <taxon>Metazoa</taxon>
        <taxon>Chordata</taxon>
        <taxon>Craniata</taxon>
        <taxon>Vertebrata</taxon>
        <taxon>Euteleostomi</taxon>
        <taxon>Mammalia</taxon>
        <taxon>Eutheria</taxon>
        <taxon>Laurasiatheria</taxon>
        <taxon>Artiodactyla</taxon>
        <taxon>Ruminantia</taxon>
        <taxon>Pecora</taxon>
        <taxon>Bovidae</taxon>
        <taxon>Bovinae</taxon>
        <taxon>Bos</taxon>
    </lineage>
</organism>
<sequence>MAMVSEFLKQAWFIENEEQEYIKTVKGSKGGPGSAVSPYPTFNPSSDVEALHKAITVKGVDEATIIEILTKRNNAQRQQIKAAYLQEKGKPLDEVLKKALLGHLEEVVLALLKTPAQFDAEELRAAMKGLGTDEDTLNEILASRTNREIREINRVYREELKRDLAKDIASDTSGDYEKALLSLAKGDRSEELAVNDDLADSDARALYEAGERRKGTDVNVFITILTTRSYPHLRRVFQKYSKYSKHDMNKVLDLELKGDIEKCLTVIVKCATSQPMFFAEKLHQAMKGIGTRHKTLIRIMVSRSEIDMNDIKACYQKLYGISLCQAILDETKGDYEKILVALCGRD</sequence>
<comment type="function">
    <text evidence="2 4 5">Plays important roles in the innate immune response as effector of glucocorticoid-mediated responses and regulator of the inflammatory process. Has anti-inflammatory activity. Plays a role in glucocorticoid-mediated down-regulation of the early phase of the inflammatory response. Contributes to the adaptive immune response by enhancing signaling cascades that are triggered by T-cell activation, regulates differentiation and proliferation of activated T-cells. Promotes the differentiation of T-cells into Th1 cells and negatively regulates differentiation into Th2 cells (By similarity). Has no effect on unstimulated T-cells. Negatively regulates hormone exocytosis via activation of the formyl peptide receptors and reorganization of the actin cytoskeleton (By similarity). Has high affinity for Ca(2+) and can bind up to eight Ca(2+) ions (By similarity). Displays Ca(2+)-dependent binding to phospholipid membranes (By similarity). Plays a role in the formation of phagocytic cups and phagosomes. Plays a role in phagocytosis by mediating the Ca(2+)-dependent interaction between phagosomes and the actin cytoskeleton (By similarity).</text>
</comment>
<comment type="function">
    <molecule>Annexin Ac2-26</molecule>
    <text evidence="2">Functions at least in part by activating the formyl peptide receptors and downstream signaling cascades. Promotes chemotaxis of granulocytes and monocytes via activation of the formyl peptide receptors. Promotes rearrangement of the actin cytoskeleton, cell polarization and cell migration. Promotes resolution of inflammation and wound healing. Acts via neutrophil N-formyl peptide receptors to enhance the release of CXCL2.</text>
</comment>
<comment type="subunit">
    <text evidence="2 4 5">Homodimer; non-covalently linked (By similarity). Homodimer; linked by transglutamylation. Homodimers linked by transglutamylation are observed in placenta, but not in other tissues. Interacts with S100A11. Heterotetramer, formed by two molecules each of S100A11 and ANXA1 (By similarity). Interacts with DYSF (By similarity). Interacts with EGFR (By similarity).</text>
</comment>
<comment type="subcellular location">
    <subcellularLocation>
        <location evidence="3">Nucleus</location>
    </subcellularLocation>
    <subcellularLocation>
        <location evidence="8">Cytoplasm</location>
    </subcellularLocation>
    <subcellularLocation>
        <location evidence="8">Cell projection</location>
        <location evidence="8">Cilium</location>
    </subcellularLocation>
    <subcellularLocation>
        <location evidence="6">Basolateral cell membrane</location>
    </subcellularLocation>
    <subcellularLocation>
        <location evidence="4">Lateral cell membrane</location>
    </subcellularLocation>
    <subcellularLocation>
        <location evidence="4">Cell membrane</location>
        <topology evidence="4">Peripheral membrane protein</topology>
    </subcellularLocation>
    <subcellularLocation>
        <location evidence="4">Apical cell membrane</location>
    </subcellularLocation>
    <subcellularLocation>
        <location evidence="4">Membrane</location>
        <topology evidence="4">Peripheral membrane protein</topology>
    </subcellularLocation>
    <subcellularLocation>
        <location evidence="3">Endosome membrane</location>
        <topology evidence="3">Peripheral membrane protein</topology>
    </subcellularLocation>
    <subcellularLocation>
        <location evidence="4">Secreted</location>
    </subcellularLocation>
    <subcellularLocation>
        <location evidence="2">Secreted</location>
        <location evidence="2">Extracellular space</location>
    </subcellularLocation>
    <subcellularLocation>
        <location evidence="2">Cell membrane</location>
        <topology evidence="2">Peripheral membrane protein</topology>
        <orientation evidence="2">Extracellular side</orientation>
    </subcellularLocation>
    <subcellularLocation>
        <location evidence="5">Early endosome</location>
    </subcellularLocation>
    <subcellularLocation>
        <location evidence="5">Cytoplasmic vesicle membrane</location>
        <topology evidence="5">Peripheral membrane protein</topology>
    </subcellularLocation>
    <subcellularLocation>
        <location evidence="4">Secreted</location>
        <location evidence="4">Extracellular exosome</location>
    </subcellularLocation>
    <subcellularLocation>
        <location evidence="4">Cytoplasmic vesicle</location>
        <location evidence="4">Secretory vesicle lumen</location>
    </subcellularLocation>
    <subcellularLocation>
        <location evidence="4">Cell projection</location>
        <location evidence="4">Phagocytic cup</location>
    </subcellularLocation>
    <text evidence="2 4">Colocalizes with actin fibers at phagocytic cups. Secreted, at least in part via exosomes and other secretory vesicles. Detected in exosomes and other extracellular vesicles. Secretion is increased in response to wounding and inflammation (By similarity). Alternatively, the secretion is dependent on protein unfolding and facilitated by the cargo receptor TMED10; it results in the protein translocation from the cytoplasm into ERGIC (endoplasmic reticulum-Golgi intermediate compartment) followed by vesicle entry and secretion (By similarity). Detected in gelatinase granules in resting neutrophils. Neutrophil adhesion to endothelial cells stimulates secretion via gelatinase granules, but foreign particle phagocytosis has no effect. Displays calcium-dependent binding to phospholipid membranes (By similarity).</text>
</comment>
<comment type="tissue specificity">
    <text evidence="8">Detected on surface epithelia and mucosal glands in nasal cavity, trachea, bronchi and bronchioles. Detected in blood vessel endothelial cells. Detected in neutrophils (at protein level).</text>
</comment>
<comment type="domain">
    <text evidence="5">The full-length protein can bind eight Ca(2+) ions via the annexin repeats. Calcium binding causes a major conformation change that modifies dimer contacts and leads to surface exposure of the N-terminal phosphorylation sites; in the absence of Ca(2+), these sites are buried in the interior of the protein core. The N-terminal region becomes disordered in response to calcium-binding.</text>
</comment>
<comment type="PTM">
    <text evidence="2">Phosphorylated by protein kinase C, EGFR and TRPM7. Phosphorylated in response to EGF treatment.</text>
</comment>
<comment type="PTM">
    <text evidence="4">Sumoylated.</text>
</comment>
<comment type="PTM">
    <text evidence="2">Proteolytically cleaved by cathepsin CTSG to release the active N-terminal peptide Ac2-26.</text>
</comment>
<comment type="miscellaneous">
    <text evidence="4">Was originally identified as calcium and phospholipid binding protein that displays Ca(2+)-dependent binding to phospholipid membranes and can promote membrane aggregation in vitro. Was initially identified as inhibitor of phospholipase A2 activity (in vitro). Inhibition of phospholipase activity is mediated via its phospholipid binding activity that limits the access of phospholipase to its substrates.</text>
</comment>
<comment type="similarity">
    <text evidence="7 9">Belongs to the annexin family.</text>
</comment>
<gene>
    <name type="primary">ANXA1</name>
    <name type="synonym">ANX1</name>
</gene>